<evidence type="ECO:0000255" key="1">
    <source>
        <dbReference type="HAMAP-Rule" id="MF_00658"/>
    </source>
</evidence>
<protein>
    <recommendedName>
        <fullName evidence="1">Ribosomal RNA large subunit methyltransferase H</fullName>
        <ecNumber evidence="1">2.1.1.177</ecNumber>
    </recommendedName>
    <alternativeName>
        <fullName evidence="1">23S rRNA (pseudouridine1915-N3)-methyltransferase</fullName>
    </alternativeName>
    <alternativeName>
        <fullName evidence="1">23S rRNA m3Psi1915 methyltransferase</fullName>
    </alternativeName>
    <alternativeName>
        <fullName evidence="1">rRNA (pseudouridine-N3-)-methyltransferase RlmH</fullName>
    </alternativeName>
</protein>
<proteinExistence type="inferred from homology"/>
<dbReference type="EC" id="2.1.1.177" evidence="1"/>
<dbReference type="EMBL" id="CP000529">
    <property type="protein sequence ID" value="ABM37045.1"/>
    <property type="molecule type" value="Genomic_DNA"/>
</dbReference>
<dbReference type="RefSeq" id="WP_011801131.1">
    <property type="nucleotide sequence ID" value="NC_008781.1"/>
</dbReference>
<dbReference type="SMR" id="A1VN17"/>
<dbReference type="STRING" id="365044.Pnap_1733"/>
<dbReference type="KEGG" id="pna:Pnap_1733"/>
<dbReference type="eggNOG" id="COG1576">
    <property type="taxonomic scope" value="Bacteria"/>
</dbReference>
<dbReference type="HOGENOM" id="CLU_100552_1_0_4"/>
<dbReference type="OrthoDB" id="9806643at2"/>
<dbReference type="Proteomes" id="UP000000644">
    <property type="component" value="Chromosome"/>
</dbReference>
<dbReference type="GO" id="GO:0005737">
    <property type="term" value="C:cytoplasm"/>
    <property type="evidence" value="ECO:0007669"/>
    <property type="project" value="UniProtKB-SubCell"/>
</dbReference>
<dbReference type="GO" id="GO:0070038">
    <property type="term" value="F:rRNA (pseudouridine-N3-)-methyltransferase activity"/>
    <property type="evidence" value="ECO:0007669"/>
    <property type="project" value="UniProtKB-UniRule"/>
</dbReference>
<dbReference type="CDD" id="cd18081">
    <property type="entry name" value="RlmH-like"/>
    <property type="match status" value="1"/>
</dbReference>
<dbReference type="Gene3D" id="3.40.1280.10">
    <property type="match status" value="1"/>
</dbReference>
<dbReference type="HAMAP" id="MF_00658">
    <property type="entry name" value="23SrRNA_methyltr_H"/>
    <property type="match status" value="1"/>
</dbReference>
<dbReference type="InterPro" id="IPR029028">
    <property type="entry name" value="Alpha/beta_knot_MTases"/>
</dbReference>
<dbReference type="InterPro" id="IPR003742">
    <property type="entry name" value="RlmH-like"/>
</dbReference>
<dbReference type="InterPro" id="IPR029026">
    <property type="entry name" value="tRNA_m1G_MTases_N"/>
</dbReference>
<dbReference type="NCBIfam" id="NF000986">
    <property type="entry name" value="PRK00103.1-4"/>
    <property type="match status" value="1"/>
</dbReference>
<dbReference type="PANTHER" id="PTHR33603">
    <property type="entry name" value="METHYLTRANSFERASE"/>
    <property type="match status" value="1"/>
</dbReference>
<dbReference type="PANTHER" id="PTHR33603:SF1">
    <property type="entry name" value="RIBOSOMAL RNA LARGE SUBUNIT METHYLTRANSFERASE H"/>
    <property type="match status" value="1"/>
</dbReference>
<dbReference type="Pfam" id="PF02590">
    <property type="entry name" value="SPOUT_MTase"/>
    <property type="match status" value="1"/>
</dbReference>
<dbReference type="PIRSF" id="PIRSF004505">
    <property type="entry name" value="MT_bac"/>
    <property type="match status" value="1"/>
</dbReference>
<dbReference type="SUPFAM" id="SSF75217">
    <property type="entry name" value="alpha/beta knot"/>
    <property type="match status" value="1"/>
</dbReference>
<comment type="function">
    <text evidence="1">Specifically methylates the pseudouridine at position 1915 (m3Psi1915) in 23S rRNA.</text>
</comment>
<comment type="catalytic activity">
    <reaction evidence="1">
        <text>pseudouridine(1915) in 23S rRNA + S-adenosyl-L-methionine = N(3)-methylpseudouridine(1915) in 23S rRNA + S-adenosyl-L-homocysteine + H(+)</text>
        <dbReference type="Rhea" id="RHEA:42752"/>
        <dbReference type="Rhea" id="RHEA-COMP:10221"/>
        <dbReference type="Rhea" id="RHEA-COMP:10222"/>
        <dbReference type="ChEBI" id="CHEBI:15378"/>
        <dbReference type="ChEBI" id="CHEBI:57856"/>
        <dbReference type="ChEBI" id="CHEBI:59789"/>
        <dbReference type="ChEBI" id="CHEBI:65314"/>
        <dbReference type="ChEBI" id="CHEBI:74486"/>
        <dbReference type="EC" id="2.1.1.177"/>
    </reaction>
</comment>
<comment type="subunit">
    <text evidence="1">Homodimer.</text>
</comment>
<comment type="subcellular location">
    <subcellularLocation>
        <location evidence="1">Cytoplasm</location>
    </subcellularLocation>
</comment>
<comment type="similarity">
    <text evidence="1">Belongs to the RNA methyltransferase RlmH family.</text>
</comment>
<accession>A1VN17</accession>
<organism>
    <name type="scientific">Polaromonas naphthalenivorans (strain CJ2)</name>
    <dbReference type="NCBI Taxonomy" id="365044"/>
    <lineage>
        <taxon>Bacteria</taxon>
        <taxon>Pseudomonadati</taxon>
        <taxon>Pseudomonadota</taxon>
        <taxon>Betaproteobacteria</taxon>
        <taxon>Burkholderiales</taxon>
        <taxon>Comamonadaceae</taxon>
        <taxon>Polaromonas</taxon>
    </lineage>
</organism>
<reference key="1">
    <citation type="journal article" date="2009" name="Environ. Microbiol.">
        <title>The genome of Polaromonas naphthalenivorans strain CJ2, isolated from coal tar-contaminated sediment, reveals physiological and metabolic versatility and evolution through extensive horizontal gene transfer.</title>
        <authorList>
            <person name="Yagi J.M."/>
            <person name="Sims D."/>
            <person name="Brettin T."/>
            <person name="Bruce D."/>
            <person name="Madsen E.L."/>
        </authorList>
    </citation>
    <scope>NUCLEOTIDE SEQUENCE [LARGE SCALE GENOMIC DNA]</scope>
    <source>
        <strain>CJ2</strain>
    </source>
</reference>
<sequence length="155" mass="17322">MRLTIVAVGQKVPDWAQTAYDDYAKRFPPELKVELKAVKTEPRGSKTLENLLAAERTRIEGAIARGCRIVALDERGTAVTTMALAEHLKNWQLSGDDVAIVIGGPDGLDAGFKQSAHQRIRLSDLTLPHAMVRVLLIEQLYRAWSITINHPYHRE</sequence>
<feature type="chain" id="PRO_1000061819" description="Ribosomal RNA large subunit methyltransferase H">
    <location>
        <begin position="1"/>
        <end position="155"/>
    </location>
</feature>
<feature type="binding site" evidence="1">
    <location>
        <position position="72"/>
    </location>
    <ligand>
        <name>S-adenosyl-L-methionine</name>
        <dbReference type="ChEBI" id="CHEBI:59789"/>
    </ligand>
</feature>
<feature type="binding site" evidence="1">
    <location>
        <position position="103"/>
    </location>
    <ligand>
        <name>S-adenosyl-L-methionine</name>
        <dbReference type="ChEBI" id="CHEBI:59789"/>
    </ligand>
</feature>
<feature type="binding site" evidence="1">
    <location>
        <begin position="122"/>
        <end position="127"/>
    </location>
    <ligand>
        <name>S-adenosyl-L-methionine</name>
        <dbReference type="ChEBI" id="CHEBI:59789"/>
    </ligand>
</feature>
<name>RLMH_POLNA</name>
<keyword id="KW-0963">Cytoplasm</keyword>
<keyword id="KW-0489">Methyltransferase</keyword>
<keyword id="KW-1185">Reference proteome</keyword>
<keyword id="KW-0698">rRNA processing</keyword>
<keyword id="KW-0949">S-adenosyl-L-methionine</keyword>
<keyword id="KW-0808">Transferase</keyword>
<gene>
    <name evidence="1" type="primary">rlmH</name>
    <name type="ordered locus">Pnap_1733</name>
</gene>